<gene>
    <name evidence="1" type="primary">plsX</name>
    <name type="ordered locus">Ecok1_09800</name>
    <name type="ORF">APECO1_171</name>
</gene>
<evidence type="ECO:0000255" key="1">
    <source>
        <dbReference type="HAMAP-Rule" id="MF_00019"/>
    </source>
</evidence>
<evidence type="ECO:0000305" key="2"/>
<protein>
    <recommendedName>
        <fullName evidence="1">Phosphate acyltransferase</fullName>
        <ecNumber evidence="1">2.3.1.274</ecNumber>
    </recommendedName>
    <alternativeName>
        <fullName evidence="1">Acyl-ACP phosphotransacylase</fullName>
    </alternativeName>
    <alternativeName>
        <fullName evidence="1">Acyl-[acyl-carrier-protein]--phosphate acyltransferase</fullName>
    </alternativeName>
    <alternativeName>
        <fullName evidence="1">Phosphate-acyl-ACP acyltransferase</fullName>
    </alternativeName>
</protein>
<feature type="chain" id="PRO_0000329228" description="Phosphate acyltransferase">
    <location>
        <begin position="1"/>
        <end position="356"/>
    </location>
</feature>
<proteinExistence type="inferred from homology"/>
<sequence length="356" mass="38224">MTRLTLALDVMGGDFGPSVTVPAALQALNSNSQLTLLLVGNPDAITPLLAKADFEQRSRLQIIPAQSVIASDARPSQAIRASRGSSMRVALELVKEGRAQACVSAGNTGALMGLAKLLLKPLEGIERPALVTVLPHQQKGKTVVLDLGANVDCDSTMLVQFAIMGSVLAEEVVEIPNPRVALLNIGEEEVKGLDSIRDASAVLKTIPSINYIGYLEANELLTGKTDVLVCDGFTGNVTLKTMEGVVRMFLSLLKSQGEGKKRSWWLLLLKRWLQKSLTRRFSHLNPDQYNGACLLGLRGTVIKSHGAANQRAFAVAIEQAVQAVQRQVPQRIAARLESVYPAGFELLDGGKSGTLR</sequence>
<comment type="function">
    <text evidence="1">Catalyzes the reversible formation of acyl-phosphate (acyl-PO(4)) from acyl-[acyl-carrier-protein] (acyl-ACP). This enzyme utilizes acyl-ACP as fatty acyl donor, but not acyl-CoA.</text>
</comment>
<comment type="catalytic activity">
    <reaction evidence="1">
        <text>a fatty acyl-[ACP] + phosphate = an acyl phosphate + holo-[ACP]</text>
        <dbReference type="Rhea" id="RHEA:42292"/>
        <dbReference type="Rhea" id="RHEA-COMP:9685"/>
        <dbReference type="Rhea" id="RHEA-COMP:14125"/>
        <dbReference type="ChEBI" id="CHEBI:43474"/>
        <dbReference type="ChEBI" id="CHEBI:59918"/>
        <dbReference type="ChEBI" id="CHEBI:64479"/>
        <dbReference type="ChEBI" id="CHEBI:138651"/>
        <dbReference type="EC" id="2.3.1.274"/>
    </reaction>
</comment>
<comment type="pathway">
    <text evidence="1">Lipid metabolism; phospholipid metabolism.</text>
</comment>
<comment type="subunit">
    <text evidence="1">Homodimer. Probably interacts with PlsY.</text>
</comment>
<comment type="subcellular location">
    <subcellularLocation>
        <location evidence="1">Cytoplasm</location>
    </subcellularLocation>
    <text evidence="1">Associated with the membrane possibly through PlsY.</text>
</comment>
<comment type="similarity">
    <text evidence="1">Belongs to the PlsX family.</text>
</comment>
<comment type="sequence caution" evidence="2">
    <conflict type="erroneous initiation">
        <sequence resource="EMBL-CDS" id="ABJ00474"/>
    </conflict>
</comment>
<organism>
    <name type="scientific">Escherichia coli O1:K1 / APEC</name>
    <dbReference type="NCBI Taxonomy" id="405955"/>
    <lineage>
        <taxon>Bacteria</taxon>
        <taxon>Pseudomonadati</taxon>
        <taxon>Pseudomonadota</taxon>
        <taxon>Gammaproteobacteria</taxon>
        <taxon>Enterobacterales</taxon>
        <taxon>Enterobacteriaceae</taxon>
        <taxon>Escherichia</taxon>
    </lineage>
</organism>
<reference key="1">
    <citation type="journal article" date="2007" name="J. Bacteriol.">
        <title>The genome sequence of avian pathogenic Escherichia coli strain O1:K1:H7 shares strong similarities with human extraintestinal pathogenic E. coli genomes.</title>
        <authorList>
            <person name="Johnson T.J."/>
            <person name="Kariyawasam S."/>
            <person name="Wannemuehler Y."/>
            <person name="Mangiamele P."/>
            <person name="Johnson S.J."/>
            <person name="Doetkott C."/>
            <person name="Skyberg J.A."/>
            <person name="Lynne A.M."/>
            <person name="Johnson J.R."/>
            <person name="Nolan L.K."/>
        </authorList>
    </citation>
    <scope>NUCLEOTIDE SEQUENCE [LARGE SCALE GENOMIC DNA]</scope>
</reference>
<dbReference type="EC" id="2.3.1.274" evidence="1"/>
<dbReference type="EMBL" id="CP000468">
    <property type="protein sequence ID" value="ABJ00474.1"/>
    <property type="status" value="ALT_INIT"/>
    <property type="molecule type" value="Genomic_DNA"/>
</dbReference>
<dbReference type="RefSeq" id="WP_000197578.1">
    <property type="nucleotide sequence ID" value="NZ_CADILS010000019.1"/>
</dbReference>
<dbReference type="SMR" id="A1A9Y4"/>
<dbReference type="GeneID" id="93776318"/>
<dbReference type="KEGG" id="ecv:APECO1_171"/>
<dbReference type="HOGENOM" id="CLU_039379_1_0_6"/>
<dbReference type="UniPathway" id="UPA00085"/>
<dbReference type="Proteomes" id="UP000008216">
    <property type="component" value="Chromosome"/>
</dbReference>
<dbReference type="GO" id="GO:0005737">
    <property type="term" value="C:cytoplasm"/>
    <property type="evidence" value="ECO:0007669"/>
    <property type="project" value="UniProtKB-SubCell"/>
</dbReference>
<dbReference type="GO" id="GO:0043811">
    <property type="term" value="F:phosphate:acyl-[acyl carrier protein] acyltransferase activity"/>
    <property type="evidence" value="ECO:0007669"/>
    <property type="project" value="UniProtKB-UniRule"/>
</dbReference>
<dbReference type="GO" id="GO:0006633">
    <property type="term" value="P:fatty acid biosynthetic process"/>
    <property type="evidence" value="ECO:0007669"/>
    <property type="project" value="UniProtKB-UniRule"/>
</dbReference>
<dbReference type="GO" id="GO:0008654">
    <property type="term" value="P:phospholipid biosynthetic process"/>
    <property type="evidence" value="ECO:0007669"/>
    <property type="project" value="UniProtKB-KW"/>
</dbReference>
<dbReference type="FunFam" id="3.40.718.10:FF:000008">
    <property type="entry name" value="Phosphate acyltransferase"/>
    <property type="match status" value="1"/>
</dbReference>
<dbReference type="Gene3D" id="3.40.718.10">
    <property type="entry name" value="Isopropylmalate Dehydrogenase"/>
    <property type="match status" value="1"/>
</dbReference>
<dbReference type="HAMAP" id="MF_00019">
    <property type="entry name" value="PlsX"/>
    <property type="match status" value="1"/>
</dbReference>
<dbReference type="InterPro" id="IPR003664">
    <property type="entry name" value="FA_synthesis"/>
</dbReference>
<dbReference type="InterPro" id="IPR012281">
    <property type="entry name" value="Phospholipid_synth_PlsX-like"/>
</dbReference>
<dbReference type="NCBIfam" id="TIGR00182">
    <property type="entry name" value="plsX"/>
    <property type="match status" value="1"/>
</dbReference>
<dbReference type="PANTHER" id="PTHR30100">
    <property type="entry name" value="FATTY ACID/PHOSPHOLIPID SYNTHESIS PROTEIN PLSX"/>
    <property type="match status" value="1"/>
</dbReference>
<dbReference type="PANTHER" id="PTHR30100:SF1">
    <property type="entry name" value="PHOSPHATE ACYLTRANSFERASE"/>
    <property type="match status" value="1"/>
</dbReference>
<dbReference type="Pfam" id="PF02504">
    <property type="entry name" value="FA_synthesis"/>
    <property type="match status" value="1"/>
</dbReference>
<dbReference type="PIRSF" id="PIRSF002465">
    <property type="entry name" value="Phsphlp_syn_PlsX"/>
    <property type="match status" value="1"/>
</dbReference>
<dbReference type="SUPFAM" id="SSF53659">
    <property type="entry name" value="Isocitrate/Isopropylmalate dehydrogenase-like"/>
    <property type="match status" value="1"/>
</dbReference>
<name>PLSX_ECOK1</name>
<accession>A1A9Y4</accession>
<keyword id="KW-0963">Cytoplasm</keyword>
<keyword id="KW-0444">Lipid biosynthesis</keyword>
<keyword id="KW-0443">Lipid metabolism</keyword>
<keyword id="KW-0594">Phospholipid biosynthesis</keyword>
<keyword id="KW-1208">Phospholipid metabolism</keyword>
<keyword id="KW-1185">Reference proteome</keyword>
<keyword id="KW-0808">Transferase</keyword>